<feature type="chain" id="PRO_0000303591" description="tRNA N6-adenosine threonylcarbamoyltransferase">
    <location>
        <begin position="1"/>
        <end position="339"/>
    </location>
</feature>
<feature type="binding site" evidence="1">
    <location>
        <position position="117"/>
    </location>
    <ligand>
        <name>Fe cation</name>
        <dbReference type="ChEBI" id="CHEBI:24875"/>
    </ligand>
</feature>
<feature type="binding site" evidence="1">
    <location>
        <position position="121"/>
    </location>
    <ligand>
        <name>Fe cation</name>
        <dbReference type="ChEBI" id="CHEBI:24875"/>
    </ligand>
</feature>
<feature type="binding site" evidence="1">
    <location>
        <begin position="140"/>
        <end position="144"/>
    </location>
    <ligand>
        <name>substrate</name>
    </ligand>
</feature>
<feature type="binding site" evidence="1">
    <location>
        <position position="173"/>
    </location>
    <ligand>
        <name>substrate</name>
    </ligand>
</feature>
<feature type="binding site" evidence="1">
    <location>
        <position position="186"/>
    </location>
    <ligand>
        <name>substrate</name>
    </ligand>
</feature>
<feature type="binding site" evidence="1">
    <location>
        <position position="279"/>
    </location>
    <ligand>
        <name>substrate</name>
    </ligand>
</feature>
<feature type="binding site" evidence="1">
    <location>
        <position position="307"/>
    </location>
    <ligand>
        <name>Fe cation</name>
        <dbReference type="ChEBI" id="CHEBI:24875"/>
    </ligand>
</feature>
<proteinExistence type="inferred from homology"/>
<sequence length="339" mass="36708">MVLVQESLILGIETSCDETAAAIVRNGKEILSNIVNSQIDIHQQFGGVVPEVASRKHIENIAGVVHRAFSEAQLAYSAIDAVAVTNRPGLVGALLVGVSFAKAFAYALEKPLIAVNHLHGHIYANFLEHRDIEFPAICLVVSGGHTSLLLMSNPNKMEVLGETRDDAAGEAFDKVARFLGLGYPGGPAIQEAATKGKAGQLQLPRVFLDRNDFEFSFSGLKTAAMNQWNKLQRRGQANVFDMAAEFQAALVEVLVEKSIKAAAKYQVRTIMMAGGVAANQELRNLMKKRTKEAGLKLFYPSLKLCTDNAAMVAANAHYHYGNRSFAPLSLNAYPSLLSL</sequence>
<comment type="function">
    <text evidence="1">Required for the formation of a threonylcarbamoyl group on adenosine at position 37 (t(6)A37) in tRNAs that read codons beginning with adenine. Is involved in the transfer of the threonylcarbamoyl moiety of threonylcarbamoyl-AMP (TC-AMP) to the N6 group of A37, together with TsaE and TsaB. TsaD likely plays a direct catalytic role in this reaction.</text>
</comment>
<comment type="catalytic activity">
    <reaction evidence="1">
        <text>L-threonylcarbamoyladenylate + adenosine(37) in tRNA = N(6)-L-threonylcarbamoyladenosine(37) in tRNA + AMP + H(+)</text>
        <dbReference type="Rhea" id="RHEA:37059"/>
        <dbReference type="Rhea" id="RHEA-COMP:10162"/>
        <dbReference type="Rhea" id="RHEA-COMP:10163"/>
        <dbReference type="ChEBI" id="CHEBI:15378"/>
        <dbReference type="ChEBI" id="CHEBI:73682"/>
        <dbReference type="ChEBI" id="CHEBI:74411"/>
        <dbReference type="ChEBI" id="CHEBI:74418"/>
        <dbReference type="ChEBI" id="CHEBI:456215"/>
        <dbReference type="EC" id="2.3.1.234"/>
    </reaction>
</comment>
<comment type="cofactor">
    <cofactor evidence="1">
        <name>Fe(2+)</name>
        <dbReference type="ChEBI" id="CHEBI:29033"/>
    </cofactor>
    <text evidence="1">Binds 1 Fe(2+) ion per subunit.</text>
</comment>
<comment type="subcellular location">
    <subcellularLocation>
        <location evidence="1">Cytoplasm</location>
    </subcellularLocation>
</comment>
<comment type="similarity">
    <text evidence="1">Belongs to the KAE1 / TsaD family.</text>
</comment>
<comment type="sequence caution" evidence="2">
    <conflict type="erroneous initiation">
        <sequence resource="EMBL-CDS" id="ABI69164"/>
    </conflict>
</comment>
<gene>
    <name evidence="1" type="primary">tsaD</name>
    <name type="synonym">gcp</name>
    <name type="ordered locus">Swol_1866</name>
</gene>
<name>TSAD_SYNWW</name>
<protein>
    <recommendedName>
        <fullName evidence="1">tRNA N6-adenosine threonylcarbamoyltransferase</fullName>
        <ecNumber evidence="1">2.3.1.234</ecNumber>
    </recommendedName>
    <alternativeName>
        <fullName evidence="1">N6-L-threonylcarbamoyladenine synthase</fullName>
        <shortName evidence="1">t(6)A synthase</shortName>
    </alternativeName>
    <alternativeName>
        <fullName evidence="1">t(6)A37 threonylcarbamoyladenosine biosynthesis protein TsaD</fullName>
    </alternativeName>
    <alternativeName>
        <fullName evidence="1">tRNA threonylcarbamoyladenosine biosynthesis protein TsaD</fullName>
    </alternativeName>
</protein>
<reference key="1">
    <citation type="journal article" date="2010" name="Environ. Microbiol.">
        <title>The genome of Syntrophomonas wolfei: new insights into syntrophic metabolism and biohydrogen production.</title>
        <authorList>
            <person name="Sieber J.R."/>
            <person name="Sims D.R."/>
            <person name="Han C."/>
            <person name="Kim E."/>
            <person name="Lykidis A."/>
            <person name="Lapidus A.L."/>
            <person name="McDonnald E."/>
            <person name="Rohlin L."/>
            <person name="Culley D.E."/>
            <person name="Gunsalus R."/>
            <person name="McInerney M.J."/>
        </authorList>
    </citation>
    <scope>NUCLEOTIDE SEQUENCE [LARGE SCALE GENOMIC DNA]</scope>
    <source>
        <strain>DSM 2245B / Goettingen</strain>
    </source>
</reference>
<organism>
    <name type="scientific">Syntrophomonas wolfei subsp. wolfei (strain DSM 2245B / Goettingen)</name>
    <dbReference type="NCBI Taxonomy" id="335541"/>
    <lineage>
        <taxon>Bacteria</taxon>
        <taxon>Bacillati</taxon>
        <taxon>Bacillota</taxon>
        <taxon>Clostridia</taxon>
        <taxon>Eubacteriales</taxon>
        <taxon>Syntrophomonadaceae</taxon>
        <taxon>Syntrophomonas</taxon>
    </lineage>
</organism>
<evidence type="ECO:0000255" key="1">
    <source>
        <dbReference type="HAMAP-Rule" id="MF_01445"/>
    </source>
</evidence>
<evidence type="ECO:0000305" key="2"/>
<accession>Q0AVU0</accession>
<dbReference type="EC" id="2.3.1.234" evidence="1"/>
<dbReference type="EMBL" id="CP000448">
    <property type="protein sequence ID" value="ABI69164.1"/>
    <property type="status" value="ALT_INIT"/>
    <property type="molecule type" value="Genomic_DNA"/>
</dbReference>
<dbReference type="SMR" id="Q0AVU0"/>
<dbReference type="STRING" id="335541.Swol_1866"/>
<dbReference type="KEGG" id="swo:Swol_1866"/>
<dbReference type="eggNOG" id="COG0533">
    <property type="taxonomic scope" value="Bacteria"/>
</dbReference>
<dbReference type="HOGENOM" id="CLU_023208_0_2_9"/>
<dbReference type="Proteomes" id="UP000001968">
    <property type="component" value="Chromosome"/>
</dbReference>
<dbReference type="GO" id="GO:0005737">
    <property type="term" value="C:cytoplasm"/>
    <property type="evidence" value="ECO:0007669"/>
    <property type="project" value="UniProtKB-SubCell"/>
</dbReference>
<dbReference type="GO" id="GO:0005506">
    <property type="term" value="F:iron ion binding"/>
    <property type="evidence" value="ECO:0007669"/>
    <property type="project" value="UniProtKB-UniRule"/>
</dbReference>
<dbReference type="GO" id="GO:0061711">
    <property type="term" value="F:N(6)-L-threonylcarbamoyladenine synthase activity"/>
    <property type="evidence" value="ECO:0007669"/>
    <property type="project" value="UniProtKB-EC"/>
</dbReference>
<dbReference type="GO" id="GO:0002949">
    <property type="term" value="P:tRNA threonylcarbamoyladenosine modification"/>
    <property type="evidence" value="ECO:0007669"/>
    <property type="project" value="UniProtKB-UniRule"/>
</dbReference>
<dbReference type="CDD" id="cd24133">
    <property type="entry name" value="ASKHA_NBD_TsaD_bac"/>
    <property type="match status" value="1"/>
</dbReference>
<dbReference type="FunFam" id="3.30.420.40:FF:000012">
    <property type="entry name" value="tRNA N6-adenosine threonylcarbamoyltransferase"/>
    <property type="match status" value="1"/>
</dbReference>
<dbReference type="FunFam" id="3.30.420.40:FF:000040">
    <property type="entry name" value="tRNA N6-adenosine threonylcarbamoyltransferase"/>
    <property type="match status" value="1"/>
</dbReference>
<dbReference type="Gene3D" id="3.30.420.40">
    <property type="match status" value="2"/>
</dbReference>
<dbReference type="HAMAP" id="MF_01445">
    <property type="entry name" value="TsaD"/>
    <property type="match status" value="1"/>
</dbReference>
<dbReference type="InterPro" id="IPR043129">
    <property type="entry name" value="ATPase_NBD"/>
</dbReference>
<dbReference type="InterPro" id="IPR000905">
    <property type="entry name" value="Gcp-like_dom"/>
</dbReference>
<dbReference type="InterPro" id="IPR017861">
    <property type="entry name" value="KAE1/TsaD"/>
</dbReference>
<dbReference type="InterPro" id="IPR022450">
    <property type="entry name" value="TsaD"/>
</dbReference>
<dbReference type="NCBIfam" id="TIGR00329">
    <property type="entry name" value="gcp_kae1"/>
    <property type="match status" value="1"/>
</dbReference>
<dbReference type="NCBIfam" id="TIGR03723">
    <property type="entry name" value="T6A_TsaD_YgjD"/>
    <property type="match status" value="1"/>
</dbReference>
<dbReference type="PANTHER" id="PTHR11735">
    <property type="entry name" value="TRNA N6-ADENOSINE THREONYLCARBAMOYLTRANSFERASE"/>
    <property type="match status" value="1"/>
</dbReference>
<dbReference type="PANTHER" id="PTHR11735:SF6">
    <property type="entry name" value="TRNA N6-ADENOSINE THREONYLCARBAMOYLTRANSFERASE, MITOCHONDRIAL"/>
    <property type="match status" value="1"/>
</dbReference>
<dbReference type="Pfam" id="PF00814">
    <property type="entry name" value="TsaD"/>
    <property type="match status" value="1"/>
</dbReference>
<dbReference type="PRINTS" id="PR00789">
    <property type="entry name" value="OSIALOPTASE"/>
</dbReference>
<dbReference type="SUPFAM" id="SSF53067">
    <property type="entry name" value="Actin-like ATPase domain"/>
    <property type="match status" value="2"/>
</dbReference>
<keyword id="KW-0012">Acyltransferase</keyword>
<keyword id="KW-0963">Cytoplasm</keyword>
<keyword id="KW-0408">Iron</keyword>
<keyword id="KW-0479">Metal-binding</keyword>
<keyword id="KW-1185">Reference proteome</keyword>
<keyword id="KW-0808">Transferase</keyword>
<keyword id="KW-0819">tRNA processing</keyword>